<organism>
    <name type="scientific">Escherichia coli (strain K12)</name>
    <dbReference type="NCBI Taxonomy" id="83333"/>
    <lineage>
        <taxon>Bacteria</taxon>
        <taxon>Pseudomonadati</taxon>
        <taxon>Pseudomonadota</taxon>
        <taxon>Gammaproteobacteria</taxon>
        <taxon>Enterobacterales</taxon>
        <taxon>Enterobacteriaceae</taxon>
        <taxon>Escherichia</taxon>
    </lineage>
</organism>
<feature type="chain" id="PRO_0000074866" description="Sensor protein RstB">
    <location>
        <begin position="1"/>
        <end position="433"/>
    </location>
</feature>
<feature type="topological domain" description="Cytoplasmic" evidence="1">
    <location>
        <begin position="1"/>
        <end position="3"/>
    </location>
</feature>
<feature type="transmembrane region" description="Helical" evidence="1">
    <location>
        <begin position="4"/>
        <end position="24"/>
    </location>
</feature>
<feature type="topological domain" description="Periplasmic" evidence="1">
    <location>
        <begin position="25"/>
        <end position="135"/>
    </location>
</feature>
<feature type="transmembrane region" description="Helical" evidence="1">
    <location>
        <begin position="136"/>
        <end position="156"/>
    </location>
</feature>
<feature type="topological domain" description="Cytoplasmic" evidence="1">
    <location>
        <begin position="157"/>
        <end position="433"/>
    </location>
</feature>
<feature type="domain" description="HAMP" evidence="2">
    <location>
        <begin position="158"/>
        <end position="210"/>
    </location>
</feature>
<feature type="domain" description="Histidine kinase" evidence="3">
    <location>
        <begin position="218"/>
        <end position="425"/>
    </location>
</feature>
<feature type="modified residue" description="Phosphohistidine; by autocatalysis" evidence="3">
    <location>
        <position position="276"/>
    </location>
</feature>
<proteinExistence type="evidence at protein level"/>
<evidence type="ECO:0000255" key="1"/>
<evidence type="ECO:0000255" key="2">
    <source>
        <dbReference type="PROSITE-ProRule" id="PRU00102"/>
    </source>
</evidence>
<evidence type="ECO:0000255" key="3">
    <source>
        <dbReference type="PROSITE-ProRule" id="PRU00107"/>
    </source>
</evidence>
<evidence type="ECO:0000269" key="4">
    <source>
    </source>
</evidence>
<evidence type="ECO:0000305" key="5">
    <source>
    </source>
</evidence>
<name>RSTB_ECOLI</name>
<accession>P18392</accession>
<reference key="1">
    <citation type="submission" date="1995-11" db="EMBL/GenBank/DDBJ databases">
        <authorList>
            <person name="Kuempel P.L."/>
        </authorList>
    </citation>
    <scope>NUCLEOTIDE SEQUENCE [GENOMIC DNA]</scope>
    <source>
        <strain>K12</strain>
    </source>
</reference>
<reference key="2">
    <citation type="journal article" date="1996" name="DNA Res.">
        <title>A 570-kb DNA sequence of the Escherichia coli K-12 genome corresponding to the 28.0-40.1 min region on the linkage map.</title>
        <authorList>
            <person name="Aiba H."/>
            <person name="Baba T."/>
            <person name="Fujita K."/>
            <person name="Hayashi K."/>
            <person name="Inada T."/>
            <person name="Isono K."/>
            <person name="Itoh T."/>
            <person name="Kasai H."/>
            <person name="Kashimoto K."/>
            <person name="Kimura S."/>
            <person name="Kitakawa M."/>
            <person name="Kitagawa M."/>
            <person name="Makino K."/>
            <person name="Miki T."/>
            <person name="Mizobuchi K."/>
            <person name="Mori H."/>
            <person name="Mori T."/>
            <person name="Motomura K."/>
            <person name="Nakade S."/>
            <person name="Nakamura Y."/>
            <person name="Nashimoto H."/>
            <person name="Nishio Y."/>
            <person name="Oshima T."/>
            <person name="Saito N."/>
            <person name="Sampei G."/>
            <person name="Seki Y."/>
            <person name="Sivasundaram S."/>
            <person name="Tagami H."/>
            <person name="Takeda J."/>
            <person name="Takemoto K."/>
            <person name="Takeuchi Y."/>
            <person name="Wada C."/>
            <person name="Yamamoto Y."/>
            <person name="Horiuchi T."/>
        </authorList>
    </citation>
    <scope>NUCLEOTIDE SEQUENCE [LARGE SCALE GENOMIC DNA]</scope>
    <source>
        <strain>K12 / W3110 / ATCC 27325 / DSM 5911</strain>
    </source>
</reference>
<reference key="3">
    <citation type="journal article" date="1997" name="Science">
        <title>The complete genome sequence of Escherichia coli K-12.</title>
        <authorList>
            <person name="Blattner F.R."/>
            <person name="Plunkett G. III"/>
            <person name="Bloch C.A."/>
            <person name="Perna N.T."/>
            <person name="Burland V."/>
            <person name="Riley M."/>
            <person name="Collado-Vides J."/>
            <person name="Glasner J.D."/>
            <person name="Rode C.K."/>
            <person name="Mayhew G.F."/>
            <person name="Gregor J."/>
            <person name="Davis N.W."/>
            <person name="Kirkpatrick H.A."/>
            <person name="Goeden M.A."/>
            <person name="Rose D.J."/>
            <person name="Mau B."/>
            <person name="Shao Y."/>
        </authorList>
    </citation>
    <scope>NUCLEOTIDE SEQUENCE [LARGE SCALE GENOMIC DNA]</scope>
    <source>
        <strain>K12 / MG1655 / ATCC 47076</strain>
    </source>
</reference>
<reference key="4">
    <citation type="journal article" date="2006" name="Mol. Syst. Biol.">
        <title>Highly accurate genome sequences of Escherichia coli K-12 strains MG1655 and W3110.</title>
        <authorList>
            <person name="Hayashi K."/>
            <person name="Morooka N."/>
            <person name="Yamamoto Y."/>
            <person name="Fujita K."/>
            <person name="Isono K."/>
            <person name="Choi S."/>
            <person name="Ohtsubo E."/>
            <person name="Baba T."/>
            <person name="Wanner B.L."/>
            <person name="Mori H."/>
            <person name="Horiuchi T."/>
        </authorList>
    </citation>
    <scope>NUCLEOTIDE SEQUENCE [LARGE SCALE GENOMIC DNA]</scope>
    <source>
        <strain>K12 / W3110 / ATCC 27325 / DSM 5911</strain>
    </source>
</reference>
<reference key="5">
    <citation type="journal article" date="1989" name="Proc. Natl. Acad. Sci. U.S.A.">
        <title>tus, the trans-acting gene required for termination of DNA replication in Escherichia coli, encodes a DNA-binding protein.</title>
        <authorList>
            <person name="Hill T.M."/>
            <person name="Tecklenburg M.L."/>
            <person name="Pelletier A.J."/>
            <person name="Kuempel P.L."/>
        </authorList>
    </citation>
    <scope>NUCLEOTIDE SEQUENCE [GENOMIC DNA] OF 251-433</scope>
</reference>
<reference key="6">
    <citation type="journal article" date="1991" name="Res. Microbiol.">
        <title>The tus gene of Escherichia coli: autoregulation, analysis of flanking sequences and identification of a complementary system in Salmonella typhimurium.</title>
        <authorList>
            <person name="Roecklein B."/>
            <person name="Pelletier A.J."/>
            <person name="Kuempel P.L."/>
        </authorList>
    </citation>
    <scope>SIMILARITY TO SENSORY TRANSDUCTION PROTEINS</scope>
</reference>
<reference key="7">
    <citation type="journal article" date="1992" name="Mol. Microbiol.">
        <title>In vivo characterization of tus gene expression in Escherichia coli.</title>
        <authorList>
            <person name="Roecklein B.A."/>
            <person name="Kuempel P.L."/>
        </authorList>
    </citation>
    <scope>MAPPING</scope>
</reference>
<reference key="8">
    <citation type="journal article" date="2003" name="J. Bacteriol.">
        <title>Identification and molecular characterization of the Mg2+ stimulon of Escherichia coli.</title>
        <authorList>
            <person name="Minagawa S."/>
            <person name="Ogasawara H."/>
            <person name="Kato A."/>
            <person name="Yamamoto K."/>
            <person name="Eguchi Y."/>
            <person name="Oshima T."/>
            <person name="Mori H."/>
            <person name="Ishihama A."/>
            <person name="Utsumi R."/>
        </authorList>
    </citation>
    <scope>INDUCTION</scope>
    <source>
        <strain>K12</strain>
    </source>
</reference>
<reference key="9">
    <citation type="journal article" date="2005" name="J. Biol. Chem.">
        <title>Functional characterization in vitro of all two-component signal transduction systems from Escherichia coli.</title>
        <authorList>
            <person name="Yamamoto K."/>
            <person name="Hirao K."/>
            <person name="Oshima T."/>
            <person name="Aiba H."/>
            <person name="Utsumi R."/>
            <person name="Ishihama A."/>
        </authorList>
    </citation>
    <scope>FUNCTION</scope>
    <scope>AUTOPHOSPHORYLATION</scope>
    <source>
        <strain>K12 / W3110 / ATCC 27325 / DSM 5911</strain>
    </source>
</reference>
<reference key="10">
    <citation type="journal article" date="2005" name="Science">
        <title>Global topology analysis of the Escherichia coli inner membrane proteome.</title>
        <authorList>
            <person name="Daley D.O."/>
            <person name="Rapp M."/>
            <person name="Granseth E."/>
            <person name="Melen K."/>
            <person name="Drew D."/>
            <person name="von Heijne G."/>
        </authorList>
    </citation>
    <scope>TOPOLOGY [LARGE SCALE ANALYSIS]</scope>
    <source>
        <strain>K12 / MG1655 / ATCC 47076</strain>
    </source>
</reference>
<protein>
    <recommendedName>
        <fullName>Sensor protein RstB</fullName>
        <ecNumber>2.7.13.3</ecNumber>
    </recommendedName>
</protein>
<dbReference type="EC" id="2.7.13.3"/>
<dbReference type="EMBL" id="U41101">
    <property type="protein sequence ID" value="AAA82082.1"/>
    <property type="molecule type" value="Genomic_DNA"/>
</dbReference>
<dbReference type="EMBL" id="X75466">
    <property type="protein sequence ID" value="CAA53208.1"/>
    <property type="molecule type" value="Genomic_DNA"/>
</dbReference>
<dbReference type="EMBL" id="U00096">
    <property type="protein sequence ID" value="AAC74681.1"/>
    <property type="molecule type" value="Genomic_DNA"/>
</dbReference>
<dbReference type="EMBL" id="AP009048">
    <property type="protein sequence ID" value="BAA15347.1"/>
    <property type="molecule type" value="Genomic_DNA"/>
</dbReference>
<dbReference type="PIR" id="C64917">
    <property type="entry name" value="C64917"/>
</dbReference>
<dbReference type="RefSeq" id="NP_416126.1">
    <property type="nucleotide sequence ID" value="NC_000913.3"/>
</dbReference>
<dbReference type="RefSeq" id="WP_000732512.1">
    <property type="nucleotide sequence ID" value="NZ_SSZK01000001.1"/>
</dbReference>
<dbReference type="SMR" id="P18392"/>
<dbReference type="BioGRID" id="4261764">
    <property type="interactions" value="20"/>
</dbReference>
<dbReference type="DIP" id="DIP-10808N"/>
<dbReference type="FunCoup" id="P18392">
    <property type="interactions" value="273"/>
</dbReference>
<dbReference type="IntAct" id="P18392">
    <property type="interactions" value="3"/>
</dbReference>
<dbReference type="STRING" id="511145.b1609"/>
<dbReference type="jPOST" id="P18392"/>
<dbReference type="PaxDb" id="511145-b1609"/>
<dbReference type="EnsemblBacteria" id="AAC74681">
    <property type="protein sequence ID" value="AAC74681"/>
    <property type="gene ID" value="b1609"/>
</dbReference>
<dbReference type="GeneID" id="948870"/>
<dbReference type="KEGG" id="ecj:JW1601"/>
<dbReference type="KEGG" id="eco:b1609"/>
<dbReference type="KEGG" id="ecoc:C3026_09260"/>
<dbReference type="PATRIC" id="fig|1411691.4.peg.653"/>
<dbReference type="EchoBASE" id="EB1215"/>
<dbReference type="eggNOG" id="COG2205">
    <property type="taxonomic scope" value="Bacteria"/>
</dbReference>
<dbReference type="HOGENOM" id="CLU_000445_89_27_6"/>
<dbReference type="InParanoid" id="P18392"/>
<dbReference type="OMA" id="DVQSVNP"/>
<dbReference type="OrthoDB" id="9804645at2"/>
<dbReference type="PhylomeDB" id="P18392"/>
<dbReference type="BioCyc" id="EcoCyc:RSTB-MONOMER"/>
<dbReference type="BioCyc" id="MetaCyc:RSTB-MONOMER"/>
<dbReference type="BRENDA" id="2.7.13.3">
    <property type="organism ID" value="2026"/>
</dbReference>
<dbReference type="PRO" id="PR:P18392"/>
<dbReference type="Proteomes" id="UP000000625">
    <property type="component" value="Chromosome"/>
</dbReference>
<dbReference type="GO" id="GO:0005886">
    <property type="term" value="C:plasma membrane"/>
    <property type="evidence" value="ECO:0000314"/>
    <property type="project" value="EcoCyc"/>
</dbReference>
<dbReference type="GO" id="GO:0005524">
    <property type="term" value="F:ATP binding"/>
    <property type="evidence" value="ECO:0007669"/>
    <property type="project" value="UniProtKB-KW"/>
</dbReference>
<dbReference type="GO" id="GO:0000155">
    <property type="term" value="F:phosphorelay sensor kinase activity"/>
    <property type="evidence" value="ECO:0000318"/>
    <property type="project" value="GO_Central"/>
</dbReference>
<dbReference type="GO" id="GO:0007165">
    <property type="term" value="P:signal transduction"/>
    <property type="evidence" value="ECO:0000314"/>
    <property type="project" value="EcoCyc"/>
</dbReference>
<dbReference type="CDD" id="cd06225">
    <property type="entry name" value="HAMP"/>
    <property type="match status" value="1"/>
</dbReference>
<dbReference type="CDD" id="cd16939">
    <property type="entry name" value="HATPase_RstB-like"/>
    <property type="match status" value="1"/>
</dbReference>
<dbReference type="CDD" id="cd00082">
    <property type="entry name" value="HisKA"/>
    <property type="match status" value="1"/>
</dbReference>
<dbReference type="FunFam" id="1.10.287.130:FF:000018">
    <property type="entry name" value="Sensor histidine kinase RstB"/>
    <property type="match status" value="1"/>
</dbReference>
<dbReference type="Gene3D" id="1.10.287.130">
    <property type="match status" value="1"/>
</dbReference>
<dbReference type="Gene3D" id="3.30.565.10">
    <property type="entry name" value="Histidine kinase-like ATPase, C-terminal domain"/>
    <property type="match status" value="1"/>
</dbReference>
<dbReference type="InterPro" id="IPR050980">
    <property type="entry name" value="2C_sensor_his_kinase"/>
</dbReference>
<dbReference type="InterPro" id="IPR003660">
    <property type="entry name" value="HAMP_dom"/>
</dbReference>
<dbReference type="InterPro" id="IPR036890">
    <property type="entry name" value="HATPase_C_sf"/>
</dbReference>
<dbReference type="InterPro" id="IPR005467">
    <property type="entry name" value="His_kinase_dom"/>
</dbReference>
<dbReference type="InterPro" id="IPR003661">
    <property type="entry name" value="HisK_dim/P_dom"/>
</dbReference>
<dbReference type="InterPro" id="IPR036097">
    <property type="entry name" value="HisK_dim/P_sf"/>
</dbReference>
<dbReference type="InterPro" id="IPR004358">
    <property type="entry name" value="Sig_transdc_His_kin-like_C"/>
</dbReference>
<dbReference type="NCBIfam" id="NF007898">
    <property type="entry name" value="PRK10604.1"/>
    <property type="match status" value="1"/>
</dbReference>
<dbReference type="PANTHER" id="PTHR44936">
    <property type="entry name" value="SENSOR PROTEIN CREC"/>
    <property type="match status" value="1"/>
</dbReference>
<dbReference type="PANTHER" id="PTHR44936:SF10">
    <property type="entry name" value="SENSOR PROTEIN RSTB"/>
    <property type="match status" value="1"/>
</dbReference>
<dbReference type="Pfam" id="PF00672">
    <property type="entry name" value="HAMP"/>
    <property type="match status" value="1"/>
</dbReference>
<dbReference type="Pfam" id="PF02518">
    <property type="entry name" value="HATPase_c"/>
    <property type="match status" value="1"/>
</dbReference>
<dbReference type="Pfam" id="PF00512">
    <property type="entry name" value="HisKA"/>
    <property type="match status" value="1"/>
</dbReference>
<dbReference type="PRINTS" id="PR00344">
    <property type="entry name" value="BCTRLSENSOR"/>
</dbReference>
<dbReference type="SMART" id="SM00304">
    <property type="entry name" value="HAMP"/>
    <property type="match status" value="1"/>
</dbReference>
<dbReference type="SMART" id="SM00387">
    <property type="entry name" value="HATPase_c"/>
    <property type="match status" value="1"/>
</dbReference>
<dbReference type="SMART" id="SM00388">
    <property type="entry name" value="HisKA"/>
    <property type="match status" value="1"/>
</dbReference>
<dbReference type="SUPFAM" id="SSF55874">
    <property type="entry name" value="ATPase domain of HSP90 chaperone/DNA topoisomerase II/histidine kinase"/>
    <property type="match status" value="1"/>
</dbReference>
<dbReference type="SUPFAM" id="SSF47384">
    <property type="entry name" value="Homodimeric domain of signal transducing histidine kinase"/>
    <property type="match status" value="1"/>
</dbReference>
<dbReference type="PROSITE" id="PS50885">
    <property type="entry name" value="HAMP"/>
    <property type="match status" value="1"/>
</dbReference>
<dbReference type="PROSITE" id="PS50109">
    <property type="entry name" value="HIS_KIN"/>
    <property type="match status" value="1"/>
</dbReference>
<gene>
    <name type="primary">rstB</name>
    <name type="synonym">uspT</name>
    <name type="ordered locus">b1609</name>
    <name type="ordered locus">JW1601</name>
</gene>
<sequence length="433" mass="49283">MKKLFIQFYLLLFVCFLVMSLLVGLVYKFTAERAGKQSLDDLMNSSLYLMRSELREIPPHDWGKTLKEMDLNLSFDLRVEPLSKYHLDDISMHRLRGGEIVALDDQYTFLQRIPRSHYVLAVGPVPYLYYLHQMRLLDIALIAFIAISLAFPVFIWMRPHWQDMLKLEAAAQRFGDGHLNERIHFDEGSSFERLGVAFNQMADNINALIASKKQLIDGIAHELRTPLVRLRYRLEMSDNLSAAESQALNRDISQLEALIEELLTYARLDRPQNELHLSEPDLPLWLSTHLADIQAVTPDKTVRIKTLVQGHYAALDMRLMERVLDNLLNNALRYCHSTVETSLLLSGNRATLIVEDDGPGIAPENREHIFEPFVRLDPSRDRSTGGCGLGLAIVHSIALAMGGTVNCDTSELGGARFSFSWPLWHNIPQFTSA</sequence>
<comment type="function">
    <text evidence="5">Member of the two-component regulatory system RstB/RstA. RstB functions as a membrane-associated protein kinase that phosphorylates RstA (Probable).</text>
</comment>
<comment type="catalytic activity">
    <reaction>
        <text>ATP + protein L-histidine = ADP + protein N-phospho-L-histidine.</text>
        <dbReference type="EC" id="2.7.13.3"/>
    </reaction>
</comment>
<comment type="subcellular location">
    <subcellularLocation>
        <location>Cell inner membrane</location>
        <topology>Multi-pass membrane protein</topology>
    </subcellularLocation>
</comment>
<comment type="induction">
    <text evidence="4">Induced by low extracellular levels of magnesium via the PhoQ/PhoP two-component regulatory system.</text>
</comment>
<comment type="PTM">
    <text>Autophosphorylated.</text>
</comment>
<keyword id="KW-0067">ATP-binding</keyword>
<keyword id="KW-0997">Cell inner membrane</keyword>
<keyword id="KW-1003">Cell membrane</keyword>
<keyword id="KW-0418">Kinase</keyword>
<keyword id="KW-0472">Membrane</keyword>
<keyword id="KW-0547">Nucleotide-binding</keyword>
<keyword id="KW-0597">Phosphoprotein</keyword>
<keyword id="KW-1185">Reference proteome</keyword>
<keyword id="KW-0808">Transferase</keyword>
<keyword id="KW-0812">Transmembrane</keyword>
<keyword id="KW-1133">Transmembrane helix</keyword>
<keyword id="KW-0902">Two-component regulatory system</keyword>